<feature type="signal peptide" evidence="3">
    <location>
        <begin position="1"/>
        <end position="22"/>
    </location>
</feature>
<feature type="chain" id="PRO_0000012999" description="Frizzled-7-A">
    <location>
        <begin position="23"/>
        <end position="549"/>
    </location>
</feature>
<feature type="topological domain" description="Extracellular" evidence="3">
    <location>
        <begin position="23"/>
        <end position="231"/>
    </location>
</feature>
<feature type="transmembrane region" description="Helical; Name=1" evidence="3">
    <location>
        <begin position="232"/>
        <end position="252"/>
    </location>
</feature>
<feature type="topological domain" description="Cytoplasmic" evidence="3">
    <location>
        <begin position="253"/>
        <end position="263"/>
    </location>
</feature>
<feature type="transmembrane region" description="Helical; Name=2" evidence="3">
    <location>
        <begin position="264"/>
        <end position="284"/>
    </location>
</feature>
<feature type="topological domain" description="Extracellular" evidence="3">
    <location>
        <begin position="285"/>
        <end position="311"/>
    </location>
</feature>
<feature type="transmembrane region" description="Helical; Name=3" evidence="3">
    <location>
        <begin position="312"/>
        <end position="332"/>
    </location>
</feature>
<feature type="topological domain" description="Cytoplasmic" evidence="3">
    <location>
        <begin position="333"/>
        <end position="354"/>
    </location>
</feature>
<feature type="transmembrane region" description="Helical; Name=4" evidence="3">
    <location>
        <begin position="355"/>
        <end position="375"/>
    </location>
</feature>
<feature type="topological domain" description="Extracellular" evidence="3">
    <location>
        <begin position="376"/>
        <end position="398"/>
    </location>
</feature>
<feature type="transmembrane region" description="Helical; Name=5" evidence="3">
    <location>
        <begin position="399"/>
        <end position="419"/>
    </location>
</feature>
<feature type="topological domain" description="Cytoplasmic" evidence="3">
    <location>
        <begin position="420"/>
        <end position="445"/>
    </location>
</feature>
<feature type="transmembrane region" description="Helical; Name=6" evidence="3">
    <location>
        <begin position="446"/>
        <end position="466"/>
    </location>
</feature>
<feature type="topological domain" description="Extracellular" evidence="3">
    <location>
        <begin position="467"/>
        <end position="503"/>
    </location>
</feature>
<feature type="transmembrane region" description="Helical; Name=7" evidence="3">
    <location>
        <begin position="504"/>
        <end position="524"/>
    </location>
</feature>
<feature type="topological domain" description="Cytoplasmic" evidence="3">
    <location>
        <begin position="525"/>
        <end position="549"/>
    </location>
</feature>
<feature type="domain" description="FZ" evidence="4">
    <location>
        <begin position="32"/>
        <end position="151"/>
    </location>
</feature>
<feature type="short sequence motif" description="Lys-Thr-X-X-X-Trp motif, mediates interaction with the PDZ domain of Dvl family members" evidence="1">
    <location>
        <begin position="527"/>
        <end position="532"/>
    </location>
</feature>
<feature type="short sequence motif" description="PDZ-binding">
    <location>
        <begin position="547"/>
        <end position="549"/>
    </location>
</feature>
<feature type="glycosylation site" description="N-linked (GlcNAc...) asparagine" evidence="3">
    <location>
        <position position="51"/>
    </location>
</feature>
<feature type="glycosylation site" description="N-linked (GlcNAc...) asparagine" evidence="3">
    <location>
        <position position="152"/>
    </location>
</feature>
<feature type="disulfide bond" evidence="4">
    <location>
        <begin position="37"/>
        <end position="98"/>
    </location>
</feature>
<feature type="disulfide bond" evidence="4">
    <location>
        <begin position="45"/>
        <end position="91"/>
    </location>
</feature>
<feature type="disulfide bond" evidence="4">
    <location>
        <begin position="82"/>
        <end position="119"/>
    </location>
</feature>
<feature type="disulfide bond" evidence="4">
    <location>
        <begin position="108"/>
        <end position="148"/>
    </location>
</feature>
<feature type="disulfide bond" evidence="4">
    <location>
        <begin position="112"/>
        <end position="136"/>
    </location>
</feature>
<feature type="sequence conflict" description="In Ref. 4; AAD52671." evidence="16" ref="4">
    <original>C</original>
    <variation>G</variation>
    <location>
        <position position="11"/>
    </location>
</feature>
<feature type="sequence conflict" description="In Ref. 5; AAD21247." evidence="16" ref="5">
    <original>L</original>
    <variation>F</variation>
    <location>
        <position position="189"/>
    </location>
</feature>
<feature type="sequence conflict" description="In Ref. 5; AAD21247." evidence="16" ref="5">
    <original>T</original>
    <variation>I</variation>
    <location>
        <position position="370"/>
    </location>
</feature>
<feature type="sequence conflict" description="In Ref. 5; AAD21247." evidence="16" ref="5">
    <original>S</original>
    <variation>F</variation>
    <location>
        <position position="395"/>
    </location>
</feature>
<feature type="sequence conflict" description="In Ref. 2; CAB45875." evidence="16" ref="2">
    <original>G</original>
    <variation>S</variation>
    <location>
        <position position="485"/>
    </location>
</feature>
<accession>Q9PUK8</accession>
<accession>Q9IB13</accession>
<accession>Q9PWN7</accession>
<accession>Q9W703</accession>
<accession>Q9W743</accession>
<organism>
    <name type="scientific">Xenopus laevis</name>
    <name type="common">African clawed frog</name>
    <dbReference type="NCBI Taxonomy" id="8355"/>
    <lineage>
        <taxon>Eukaryota</taxon>
        <taxon>Metazoa</taxon>
        <taxon>Chordata</taxon>
        <taxon>Craniata</taxon>
        <taxon>Vertebrata</taxon>
        <taxon>Euteleostomi</taxon>
        <taxon>Amphibia</taxon>
        <taxon>Batrachia</taxon>
        <taxon>Anura</taxon>
        <taxon>Pipoidea</taxon>
        <taxon>Pipidae</taxon>
        <taxon>Xenopodinae</taxon>
        <taxon>Xenopus</taxon>
        <taxon>Xenopus</taxon>
    </lineage>
</organism>
<name>FZD7A_XENLA</name>
<sequence>MSSTVSLLFCCLFLQLCPSAQQYHGEKGISVPDHGFCQPISIPLCTDIAYNQTIMPNLLGHTNQEDAGLEVHQFYPLVKVQCSPELRFFLCSMYAPVCTVLEQAIPPCRSLCERARQGCEALMNKFGFQWPERLRCENFPVHGAGEICVGQNTSDNSPSGPTARPSPYLPDSITFQPHPHRDFTCPRQLKVPPYLAYRFLGEKDCGAPCEPGKANGLMYFKEEEVRFARLWVGIWAILCCISTLFTVLTYLVDMRRFSYPERPIIFLSGCYFMVAVAYTAGFLLEERAVCVERFSEDSYRTVAQGTKKEGCTILFMILYFFGMASSIWWVILSLTWFLSAGMKWGHEAIEANSQYFHLAAWAVPAVKTITILAMGQVDGDVLSGVCYVGINSVDSLRGFVLAPLFVYLFIGTSFLLAGFVSLFRIRTIMKHDGTKTEKLEKLMVRIGVFSVMYTVPATIVLACYFYEQAFRDTWEKTWLVQTCKGYAVPCPNYNFAPMSPDFTVFMIKYLMTMIVGITSSFWIWSGKTLQSWRRFYHRLSNGSKGETAV</sequence>
<reference key="1">
    <citation type="journal article" date="2000" name="Development">
        <title>The putative Wnt receptor Xenopus frizzled-7 functions upstream of beta-catenin in vertebrate dorso-ventral mesoderm patterning.</title>
        <authorList>
            <person name="Sumanas S."/>
            <person name="Strege P."/>
            <person name="Heasman J."/>
            <person name="Ekker S.C."/>
        </authorList>
    </citation>
    <scope>NUCLEOTIDE SEQUENCE [MRNA]</scope>
    <scope>FUNCTION</scope>
    <source>
        <tissue>Oocyte</tissue>
    </source>
</reference>
<reference key="2">
    <citation type="journal article" date="2000" name="Development">
        <title>Role of frizzled 7 in the regulation of convergent extension movements during gastrulation in Xenopus laevis.</title>
        <authorList>
            <person name="Djiane A."/>
            <person name="Riou J.-F."/>
            <person name="Umbhauer M."/>
            <person name="Boucaut J.-C."/>
            <person name="Shi D.-L."/>
        </authorList>
    </citation>
    <scope>NUCLEOTIDE SEQUENCE [MRNA]</scope>
    <scope>FUNCTION</scope>
    <scope>INTERACTION WITH WNT11</scope>
    <scope>TISSUE SPECIFICITY</scope>
    <scope>DEVELOPMENTAL STAGE</scope>
    <source>
        <tissue>Gastrula</tissue>
    </source>
</reference>
<reference key="3">
    <citation type="journal article" date="2000" name="Dev. Growth Differ.">
        <title>The maternal Xenopus beta-catenin signaling pathway, activated by frizzled homologs, induces goosecoid in a cell non-autonomous manner.</title>
        <authorList>
            <person name="Brown J.D."/>
            <person name="Hallagan S.E."/>
            <person name="McGrew L.L."/>
            <person name="Miller J.R."/>
            <person name="Moon R.T."/>
        </authorList>
    </citation>
    <scope>NUCLEOTIDE SEQUENCE [MRNA]</scope>
    <scope>FUNCTION</scope>
    <scope>TISSUE SPECIFICITY</scope>
    <scope>DEVELOPMENTAL STAGE</scope>
    <source>
        <tissue>Oocyte</tissue>
    </source>
</reference>
<reference key="4">
    <citation type="journal article" date="2000" name="Mech. Dev.">
        <title>Xenopus frizzled 7 can act in canonical and non-canonical Wnt signaling pathways: implications on early patterning and morphogenesis.</title>
        <authorList>
            <person name="Medina A."/>
            <person name="Reintsch W."/>
            <person name="Steinbeisser H."/>
        </authorList>
    </citation>
    <scope>NUCLEOTIDE SEQUENCE [MRNA]</scope>
    <scope>FUNCTION</scope>
    <scope>TISSUE SPECIFICITY</scope>
    <scope>DEVELOPMENTAL STAGE</scope>
    <source>
        <tissue>Neurula</tissue>
    </source>
</reference>
<reference key="5">
    <citation type="submission" date="1998-12" db="EMBL/GenBank/DDBJ databases">
        <authorList>
            <person name="Gradl D."/>
            <person name="Buhrmann V."/>
            <person name="Wedlich D."/>
        </authorList>
    </citation>
    <scope>NUCLEOTIDE SEQUENCE [MRNA]</scope>
</reference>
<reference key="6">
    <citation type="journal article" date="2000" name="Dev. Dyn.">
        <title>Interaction of Frizzled 7 and Dishevelled in Xenopus.</title>
        <authorList>
            <person name="Medina A."/>
            <person name="Steinbeisser H."/>
        </authorList>
    </citation>
    <scope>FUNCTION</scope>
</reference>
<reference key="7">
    <citation type="journal article" date="2000" name="EMBO J.">
        <title>The C-terminal cytoplasmic Lys-Thr-X-X-X-Trp motif in frizzled receptors mediates Wnt/beta-catenin signalling.</title>
        <authorList>
            <person name="Umbhauer M."/>
            <person name="Djiane A."/>
            <person name="Goisset C."/>
            <person name="Penzo-Mendez A."/>
            <person name="Riou J.-F."/>
            <person name="Boucaut J.-C."/>
            <person name="Shi D.-L."/>
        </authorList>
    </citation>
    <scope>FUNCTION</scope>
</reference>
<reference key="8">
    <citation type="journal article" date="2001" name="Genesis">
        <title>Xenopus frizzled-7 morphant displays defects in dorsoventral patterning and convergent extension movements during gastrulation.</title>
        <authorList>
            <person name="Sumanas S."/>
            <person name="Ekker S.C."/>
        </authorList>
    </citation>
    <scope>FUNCTION</scope>
</reference>
<reference key="9">
    <citation type="journal article" date="2001" name="Int. J. Dev. Biol.">
        <title>Functional analysis of the Xenopus frizzled 7 protein domains using chimeric receptors.</title>
        <authorList>
            <person name="Swain R.K."/>
            <person name="Medina A."/>
            <person name="Steinbeisser H."/>
        </authorList>
    </citation>
    <scope>FUNCTION</scope>
    <scope>DOMAIN</scope>
</reference>
<reference key="10">
    <citation type="journal article" date="2001" name="Nature">
        <title>Frizzled-7 signalling controls tissue separation during Xenopus gastrulation.</title>
        <authorList>
            <person name="Winklbauer R."/>
            <person name="Medina A."/>
            <person name="Swain R.K."/>
            <person name="Steinbeisser H."/>
        </authorList>
    </citation>
    <scope>FUNCTION</scope>
</reference>
<reference key="11">
    <citation type="journal article" date="2004" name="EMBO J.">
        <title>Xenopus paraxial protocadherin has signaling functions and is involved in tissue separation.</title>
        <authorList>
            <person name="Medina A."/>
            <person name="Swain R.K."/>
            <person name="Kuerner K.-M."/>
            <person name="Steinbeisser H."/>
        </authorList>
    </citation>
    <scope>FUNCTION</scope>
    <scope>INTERACTION WITH PCDH8</scope>
</reference>
<reference key="12">
    <citation type="journal article" date="2006" name="Nat. Cell Biol.">
        <title>Syndecan-4 regulates non-canonical Wnt signalling and is essential for convergent and extension movements in Xenopus embryos.</title>
        <authorList>
            <person name="Munoz R."/>
            <person name="Moreno M."/>
            <person name="Oliva C."/>
            <person name="Orbenes C."/>
            <person name="Larrain J."/>
        </authorList>
    </citation>
    <scope>FUNCTION</scope>
    <scope>INTERACTION WITH SDC4</scope>
</reference>
<keyword id="KW-1003">Cell membrane</keyword>
<keyword id="KW-0217">Developmental protein</keyword>
<keyword id="KW-1015">Disulfide bond</keyword>
<keyword id="KW-0967">Endosome</keyword>
<keyword id="KW-0297">G-protein coupled receptor</keyword>
<keyword id="KW-0325">Glycoprotein</keyword>
<keyword id="KW-0472">Membrane</keyword>
<keyword id="KW-0675">Receptor</keyword>
<keyword id="KW-1185">Reference proteome</keyword>
<keyword id="KW-0732">Signal</keyword>
<keyword id="KW-0807">Transducer</keyword>
<keyword id="KW-0812">Transmembrane</keyword>
<keyword id="KW-1133">Transmembrane helix</keyword>
<keyword id="KW-0879">Wnt signaling pathway</keyword>
<protein>
    <recommendedName>
        <fullName>Frizzled-7-A</fullName>
        <shortName>Fz-7-A</shortName>
        <shortName>Xfz7-A</shortName>
    </recommendedName>
</protein>
<proteinExistence type="evidence at protein level"/>
<evidence type="ECO:0000250" key="1"/>
<evidence type="ECO:0000250" key="2">
    <source>
        <dbReference type="UniProtKB" id="O75084"/>
    </source>
</evidence>
<evidence type="ECO:0000255" key="3"/>
<evidence type="ECO:0000255" key="4">
    <source>
        <dbReference type="PROSITE-ProRule" id="PRU00090"/>
    </source>
</evidence>
<evidence type="ECO:0000269" key="5">
    <source>
    </source>
</evidence>
<evidence type="ECO:0000269" key="6">
    <source>
    </source>
</evidence>
<evidence type="ECO:0000269" key="7">
    <source>
    </source>
</evidence>
<evidence type="ECO:0000269" key="8">
    <source>
    </source>
</evidence>
<evidence type="ECO:0000269" key="9">
    <source>
    </source>
</evidence>
<evidence type="ECO:0000269" key="10">
    <source>
    </source>
</evidence>
<evidence type="ECO:0000269" key="11">
    <source>
    </source>
</evidence>
<evidence type="ECO:0000269" key="12">
    <source>
    </source>
</evidence>
<evidence type="ECO:0000269" key="13">
    <source>
    </source>
</evidence>
<evidence type="ECO:0000269" key="14">
    <source>
    </source>
</evidence>
<evidence type="ECO:0000269" key="15">
    <source ref="3"/>
</evidence>
<evidence type="ECO:0000305" key="16"/>
<dbReference type="EMBL" id="AF039215">
    <property type="protein sequence ID" value="AAF63152.1"/>
    <property type="molecule type" value="mRNA"/>
</dbReference>
<dbReference type="EMBL" id="AJ243323">
    <property type="protein sequence ID" value="CAB45875.1"/>
    <property type="molecule type" value="mRNA"/>
</dbReference>
<dbReference type="EMBL" id="AF179213">
    <property type="protein sequence ID" value="AAD52671.1"/>
    <property type="molecule type" value="mRNA"/>
</dbReference>
<dbReference type="EMBL" id="AF114151">
    <property type="protein sequence ID" value="AAD21247.1"/>
    <property type="molecule type" value="mRNA"/>
</dbReference>
<dbReference type="SMR" id="Q9PUK8"/>
<dbReference type="IntAct" id="Q9PUK8">
    <property type="interactions" value="4"/>
</dbReference>
<dbReference type="MINT" id="Q9PUK8"/>
<dbReference type="GlyCosmos" id="Q9PUK8">
    <property type="glycosylation" value="2 sites, No reported glycans"/>
</dbReference>
<dbReference type="DNASU" id="378787"/>
<dbReference type="GeneID" id="378787"/>
<dbReference type="AGR" id="Xenbase:XB-GENE-483735"/>
<dbReference type="CTD" id="378787"/>
<dbReference type="Xenbase" id="XB-GENE-483735">
    <property type="gene designation" value="fzd7.L"/>
</dbReference>
<dbReference type="OMA" id="SFSCPRQ"/>
<dbReference type="OrthoDB" id="10053709at2759"/>
<dbReference type="Proteomes" id="UP000186698">
    <property type="component" value="Unplaced"/>
</dbReference>
<dbReference type="Bgee" id="378787">
    <property type="expression patterns" value="Expressed in gastrula and 18 other cell types or tissues"/>
</dbReference>
<dbReference type="GO" id="GO:0010008">
    <property type="term" value="C:endosome membrane"/>
    <property type="evidence" value="ECO:0007669"/>
    <property type="project" value="UniProtKB-SubCell"/>
</dbReference>
<dbReference type="GO" id="GO:0016020">
    <property type="term" value="C:membrane"/>
    <property type="evidence" value="ECO:0000303"/>
    <property type="project" value="UniProtKB"/>
</dbReference>
<dbReference type="GO" id="GO:0005886">
    <property type="term" value="C:plasma membrane"/>
    <property type="evidence" value="ECO:0000318"/>
    <property type="project" value="GO_Central"/>
</dbReference>
<dbReference type="GO" id="GO:0004930">
    <property type="term" value="F:G protein-coupled receptor activity"/>
    <property type="evidence" value="ECO:0007669"/>
    <property type="project" value="UniProtKB-KW"/>
</dbReference>
<dbReference type="GO" id="GO:0045545">
    <property type="term" value="F:syndecan binding"/>
    <property type="evidence" value="ECO:0000353"/>
    <property type="project" value="UniProtKB"/>
</dbReference>
<dbReference type="GO" id="GO:0042813">
    <property type="term" value="F:Wnt receptor activity"/>
    <property type="evidence" value="ECO:0000318"/>
    <property type="project" value="GO_Central"/>
</dbReference>
<dbReference type="GO" id="GO:0017147">
    <property type="term" value="F:Wnt-protein binding"/>
    <property type="evidence" value="ECO:0000353"/>
    <property type="project" value="UniProtKB"/>
</dbReference>
<dbReference type="GO" id="GO:0060070">
    <property type="term" value="P:canonical Wnt signaling pathway"/>
    <property type="evidence" value="ECO:0000316"/>
    <property type="project" value="BHF-UCL"/>
</dbReference>
<dbReference type="GO" id="GO:0060027">
    <property type="term" value="P:convergent extension involved in gastrulation"/>
    <property type="evidence" value="ECO:0000315"/>
    <property type="project" value="UniProtKB"/>
</dbReference>
<dbReference type="GO" id="GO:0009950">
    <property type="term" value="P:dorsal/ventral axis specification"/>
    <property type="evidence" value="ECO:0000315"/>
    <property type="project" value="UniProtKB"/>
</dbReference>
<dbReference type="GO" id="GO:0001707">
    <property type="term" value="P:mesoderm formation"/>
    <property type="evidence" value="ECO:0000315"/>
    <property type="project" value="UniProtKB"/>
</dbReference>
<dbReference type="GO" id="GO:0035567">
    <property type="term" value="P:non-canonical Wnt signaling pathway"/>
    <property type="evidence" value="ECO:0000318"/>
    <property type="project" value="GO_Central"/>
</dbReference>
<dbReference type="GO" id="GO:0045944">
    <property type="term" value="P:positive regulation of transcription by RNA polymerase II"/>
    <property type="evidence" value="ECO:0000316"/>
    <property type="project" value="BHF-UCL"/>
</dbReference>
<dbReference type="GO" id="GO:0008104">
    <property type="term" value="P:protein localization"/>
    <property type="evidence" value="ECO:0000316"/>
    <property type="project" value="UniProtKB"/>
</dbReference>
<dbReference type="GO" id="GO:0048729">
    <property type="term" value="P:tissue morphogenesis"/>
    <property type="evidence" value="ECO:0000316"/>
    <property type="project" value="UniProtKB"/>
</dbReference>
<dbReference type="GO" id="GO:0016055">
    <property type="term" value="P:Wnt signaling pathway"/>
    <property type="evidence" value="ECO:0000315"/>
    <property type="project" value="UniProtKB"/>
</dbReference>
<dbReference type="CDD" id="cd15246">
    <property type="entry name" value="7tmF_FZD7"/>
    <property type="match status" value="1"/>
</dbReference>
<dbReference type="CDD" id="cd07466">
    <property type="entry name" value="CRD_FZ7"/>
    <property type="match status" value="1"/>
</dbReference>
<dbReference type="FunFam" id="1.10.2000.10:FF:000003">
    <property type="entry name" value="Frizzled class receptor 2"/>
    <property type="match status" value="1"/>
</dbReference>
<dbReference type="FunFam" id="1.20.1070.10:FF:000029">
    <property type="entry name" value="Frizzled class receptor 2"/>
    <property type="match status" value="1"/>
</dbReference>
<dbReference type="Gene3D" id="1.10.2000.10">
    <property type="entry name" value="Frizzled cysteine-rich domain"/>
    <property type="match status" value="1"/>
</dbReference>
<dbReference type="Gene3D" id="1.20.1070.10">
    <property type="entry name" value="Rhodopsin 7-helix transmembrane proteins"/>
    <property type="match status" value="1"/>
</dbReference>
<dbReference type="InterPro" id="IPR042742">
    <property type="entry name" value="Frizzled-7_CRD"/>
</dbReference>
<dbReference type="InterPro" id="IPR015526">
    <property type="entry name" value="Frizzled/SFRP"/>
</dbReference>
<dbReference type="InterPro" id="IPR000539">
    <property type="entry name" value="Frizzled/Smoothened_7TM"/>
</dbReference>
<dbReference type="InterPro" id="IPR020067">
    <property type="entry name" value="Frizzled_dom"/>
</dbReference>
<dbReference type="InterPro" id="IPR036790">
    <property type="entry name" value="Frizzled_dom_sf"/>
</dbReference>
<dbReference type="InterPro" id="IPR017981">
    <property type="entry name" value="GPCR_2-like_7TM"/>
</dbReference>
<dbReference type="PANTHER" id="PTHR11309">
    <property type="entry name" value="FRIZZLED"/>
    <property type="match status" value="1"/>
</dbReference>
<dbReference type="PANTHER" id="PTHR11309:SF31">
    <property type="entry name" value="FRIZZLED-7"/>
    <property type="match status" value="1"/>
</dbReference>
<dbReference type="Pfam" id="PF01534">
    <property type="entry name" value="Frizzled"/>
    <property type="match status" value="1"/>
</dbReference>
<dbReference type="Pfam" id="PF01392">
    <property type="entry name" value="Fz"/>
    <property type="match status" value="1"/>
</dbReference>
<dbReference type="PRINTS" id="PR00489">
    <property type="entry name" value="FRIZZLED"/>
</dbReference>
<dbReference type="SMART" id="SM00063">
    <property type="entry name" value="FRI"/>
    <property type="match status" value="1"/>
</dbReference>
<dbReference type="SMART" id="SM01330">
    <property type="entry name" value="Frizzled"/>
    <property type="match status" value="1"/>
</dbReference>
<dbReference type="SUPFAM" id="SSF63501">
    <property type="entry name" value="Frizzled cysteine-rich domain"/>
    <property type="match status" value="1"/>
</dbReference>
<dbReference type="PROSITE" id="PS50038">
    <property type="entry name" value="FZ"/>
    <property type="match status" value="1"/>
</dbReference>
<dbReference type="PROSITE" id="PS50261">
    <property type="entry name" value="G_PROTEIN_RECEP_F2_4"/>
    <property type="match status" value="1"/>
</dbReference>
<comment type="function">
    <text evidence="5 6 7 8 9 10 11 12 13 14 15">Receptor for Wnt proteins. Acts in both canonical and non-canonical Wnt pathways. Although different papers report differing Wnt preferences, wnt5a, wnt8b and wnt11 have been proposed as synergists. In the canonical Wnt pathway, acts via beta-catenin to promote the expression of the dorsal genes siamois, twin and nodal3 and to establish the dorsal axis of the embryo and induce dorsal mesoderm formation. In a non-canonical Wnt/planar cell polarity (PCP) pathway, acts with sdc4 and dvl2/dsh to regulate convergent extension cell movements during gastrulation. Triggers phosphorylation of dvl2/dsh and its translocation to the plasma membrane. In a third branch of Wnt signaling, acts in a non-canonical pathway via trimeric G proteins, and independently of dvl2/dsh, to recruit protein kinase C (PKC) to the membrane and thus activate PKC. PKC signaling controls cell sorting and tissue separation during gastrulation.</text>
</comment>
<comment type="subunit">
    <text evidence="7 13 14">Interacts with wnt11 and sdc4. The extracellular domain interacts with the extracellular domain of pcdh8/papc.</text>
</comment>
<comment type="subcellular location">
    <subcellularLocation>
        <location evidence="16">Cell membrane</location>
        <topology evidence="16">Multi-pass membrane protein</topology>
    </subcellularLocation>
    <subcellularLocation>
        <location evidence="2">Endosome membrane</location>
        <topology evidence="2">Multi-pass membrane protein</topology>
    </subcellularLocation>
    <text evidence="2">Associated to the plasma membrane in the presence of FZD7 and phosphatidylinositol 4,5-bisphosphate (PIP2). Localized in recycling endosomes in other conditions.</text>
</comment>
<comment type="tissue specificity">
    <text evidence="5 7 15">Expressed in the animal region of cleavage stage embryos. During gastrulation, broadly expressed on the dorsal side of the embryo in deep mesodermal cells surrounding the blastopore lip and in presumptive anterior neuroectoderm. During neurulation, becomes progressively more restricted to the dorsal epidermis, neural plate, and neural tube. Expressed in the cranial neural crest of neurulae and tailbud embryos as well as the pronephros of tailbud embryos. Localized to the brain of neurulae, tailbud embryos and tadpoles. In tadpoles, strongly expressed in the eye and developing heart.</text>
</comment>
<comment type="developmental stage">
    <text evidence="5 7 15">Expressed both maternally and zygotically. Expressed at low levels during cleavage stages, with zygotic expression increasing at the start of gastrulation, remaining constant through the gastrulation stages and then decreasing from late neurula stage onwards.</text>
</comment>
<comment type="domain">
    <text evidence="10">Lys-Thr-X-X-X-Trp motif interacts with the PDZ domain of Dvl (Disheveled) family members and is involved in the activation of the Wnt/beta-catenin signaling pathway.</text>
</comment>
<comment type="domain">
    <text evidence="1">The FZ domain is involved in binding with Wnt ligands.</text>
</comment>
<comment type="domain">
    <text evidence="10">The extracellular domain interacts with Wnt proteins and the intracellular C-terminus transmits the Wnt signal.</text>
</comment>
<comment type="similarity">
    <text evidence="16">Belongs to the G-protein coupled receptor Fz/Smo family.</text>
</comment>
<gene>
    <name type="primary">fzd7-a</name>
    <name type="synonym">fz7-a</name>
</gene>